<organism>
    <name type="scientific">Streptococcus agalactiae serotype Ia (strain ATCC 27591 / A909 / CDC SS700)</name>
    <dbReference type="NCBI Taxonomy" id="205921"/>
    <lineage>
        <taxon>Bacteria</taxon>
        <taxon>Bacillati</taxon>
        <taxon>Bacillota</taxon>
        <taxon>Bacilli</taxon>
        <taxon>Lactobacillales</taxon>
        <taxon>Streptococcaceae</taxon>
        <taxon>Streptococcus</taxon>
    </lineage>
</organism>
<comment type="function">
    <text evidence="1">Required for rescue of stalled ribosomes mediated by trans-translation. Binds to transfer-messenger RNA (tmRNA), required for stable association of tmRNA with ribosomes. tmRNA and SmpB together mimic tRNA shape, replacing the anticodon stem-loop with SmpB. tmRNA is encoded by the ssrA gene; the 2 termini fold to resemble tRNA(Ala) and it encodes a 'tag peptide', a short internal open reading frame. During trans-translation Ala-aminoacylated tmRNA acts like a tRNA, entering the A-site of stalled ribosomes, displacing the stalled mRNA. The ribosome then switches to translate the ORF on the tmRNA; the nascent peptide is terminated with the 'tag peptide' encoded by the tmRNA and targeted for degradation. The ribosome is freed to recommence translation, which seems to be the essential function of trans-translation.</text>
</comment>
<comment type="subcellular location">
    <subcellularLocation>
        <location evidence="1">Cytoplasm</location>
    </subcellularLocation>
    <text evidence="1">The tmRNA-SmpB complex associates with stalled 70S ribosomes.</text>
</comment>
<comment type="similarity">
    <text evidence="1">Belongs to the SmpB family.</text>
</comment>
<reference key="1">
    <citation type="journal article" date="2005" name="Proc. Natl. Acad. Sci. U.S.A.">
        <title>Genome analysis of multiple pathogenic isolates of Streptococcus agalactiae: implications for the microbial 'pan-genome'.</title>
        <authorList>
            <person name="Tettelin H."/>
            <person name="Masignani V."/>
            <person name="Cieslewicz M.J."/>
            <person name="Donati C."/>
            <person name="Medini D."/>
            <person name="Ward N.L."/>
            <person name="Angiuoli S.V."/>
            <person name="Crabtree J."/>
            <person name="Jones A.L."/>
            <person name="Durkin A.S."/>
            <person name="DeBoy R.T."/>
            <person name="Davidsen T.M."/>
            <person name="Mora M."/>
            <person name="Scarselli M."/>
            <person name="Margarit y Ros I."/>
            <person name="Peterson J.D."/>
            <person name="Hauser C.R."/>
            <person name="Sundaram J.P."/>
            <person name="Nelson W.C."/>
            <person name="Madupu R."/>
            <person name="Brinkac L.M."/>
            <person name="Dodson R.J."/>
            <person name="Rosovitz M.J."/>
            <person name="Sullivan S.A."/>
            <person name="Daugherty S.C."/>
            <person name="Haft D.H."/>
            <person name="Selengut J."/>
            <person name="Gwinn M.L."/>
            <person name="Zhou L."/>
            <person name="Zafar N."/>
            <person name="Khouri H."/>
            <person name="Radune D."/>
            <person name="Dimitrov G."/>
            <person name="Watkins K."/>
            <person name="O'Connor K.J."/>
            <person name="Smith S."/>
            <person name="Utterback T.R."/>
            <person name="White O."/>
            <person name="Rubens C.E."/>
            <person name="Grandi G."/>
            <person name="Madoff L.C."/>
            <person name="Kasper D.L."/>
            <person name="Telford J.L."/>
            <person name="Wessels M.R."/>
            <person name="Rappuoli R."/>
            <person name="Fraser C.M."/>
        </authorList>
    </citation>
    <scope>NUCLEOTIDE SEQUENCE [LARGE SCALE GENOMIC DNA]</scope>
    <source>
        <strain>ATCC 27591 / A909 / CDC SS700</strain>
    </source>
</reference>
<sequence length="155" mass="17708">MVKGQGNVVAQNKKAHHDYTIVETIEAGIVLTGTEIKSVRAARITLKDGYAQIKNGEAWLINVHITPYDQGNIWNQDPDRTRKLLLKKREIEKISNELKGTGMTLVPLKVYLKDGFAKVLLGLAKGKHDYDKRESIKRREQNRDIARQLKNYNSR</sequence>
<dbReference type="EMBL" id="CP000114">
    <property type="protein sequence ID" value="ABA45750.1"/>
    <property type="molecule type" value="Genomic_DNA"/>
</dbReference>
<dbReference type="RefSeq" id="WP_000238456.1">
    <property type="nucleotide sequence ID" value="NC_007432.1"/>
</dbReference>
<dbReference type="SMR" id="Q3K035"/>
<dbReference type="GeneID" id="66886342"/>
<dbReference type="KEGG" id="sak:SAK_1511"/>
<dbReference type="HOGENOM" id="CLU_108953_0_0_9"/>
<dbReference type="GO" id="GO:0005829">
    <property type="term" value="C:cytosol"/>
    <property type="evidence" value="ECO:0007669"/>
    <property type="project" value="TreeGrafter"/>
</dbReference>
<dbReference type="GO" id="GO:0003723">
    <property type="term" value="F:RNA binding"/>
    <property type="evidence" value="ECO:0007669"/>
    <property type="project" value="UniProtKB-UniRule"/>
</dbReference>
<dbReference type="GO" id="GO:0070929">
    <property type="term" value="P:trans-translation"/>
    <property type="evidence" value="ECO:0007669"/>
    <property type="project" value="UniProtKB-UniRule"/>
</dbReference>
<dbReference type="CDD" id="cd09294">
    <property type="entry name" value="SmpB"/>
    <property type="match status" value="1"/>
</dbReference>
<dbReference type="Gene3D" id="2.40.280.10">
    <property type="match status" value="1"/>
</dbReference>
<dbReference type="HAMAP" id="MF_00023">
    <property type="entry name" value="SmpB"/>
    <property type="match status" value="1"/>
</dbReference>
<dbReference type="InterPro" id="IPR023620">
    <property type="entry name" value="SmpB"/>
</dbReference>
<dbReference type="InterPro" id="IPR000037">
    <property type="entry name" value="SsrA-bd_prot"/>
</dbReference>
<dbReference type="InterPro" id="IPR020081">
    <property type="entry name" value="SsrA-bd_prot_CS"/>
</dbReference>
<dbReference type="NCBIfam" id="NF003843">
    <property type="entry name" value="PRK05422.1"/>
    <property type="match status" value="1"/>
</dbReference>
<dbReference type="NCBIfam" id="TIGR00086">
    <property type="entry name" value="smpB"/>
    <property type="match status" value="1"/>
</dbReference>
<dbReference type="PANTHER" id="PTHR30308:SF2">
    <property type="entry name" value="SSRA-BINDING PROTEIN"/>
    <property type="match status" value="1"/>
</dbReference>
<dbReference type="PANTHER" id="PTHR30308">
    <property type="entry name" value="TMRNA-BINDING COMPONENT OF TRANS-TRANSLATION TAGGING COMPLEX"/>
    <property type="match status" value="1"/>
</dbReference>
<dbReference type="Pfam" id="PF01668">
    <property type="entry name" value="SmpB"/>
    <property type="match status" value="1"/>
</dbReference>
<dbReference type="SUPFAM" id="SSF74982">
    <property type="entry name" value="Small protein B (SmpB)"/>
    <property type="match status" value="1"/>
</dbReference>
<dbReference type="PROSITE" id="PS01317">
    <property type="entry name" value="SSRP"/>
    <property type="match status" value="1"/>
</dbReference>
<gene>
    <name evidence="1" type="primary">smpB</name>
    <name type="ordered locus">SAK_1511</name>
</gene>
<evidence type="ECO:0000255" key="1">
    <source>
        <dbReference type="HAMAP-Rule" id="MF_00023"/>
    </source>
</evidence>
<accession>Q3K035</accession>
<protein>
    <recommendedName>
        <fullName evidence="1">SsrA-binding protein</fullName>
    </recommendedName>
    <alternativeName>
        <fullName evidence="1">Small protein B</fullName>
    </alternativeName>
</protein>
<feature type="chain" id="PRO_1000002161" description="SsrA-binding protein">
    <location>
        <begin position="1"/>
        <end position="155"/>
    </location>
</feature>
<proteinExistence type="inferred from homology"/>
<name>SSRP_STRA1</name>
<keyword id="KW-0963">Cytoplasm</keyword>
<keyword id="KW-0694">RNA-binding</keyword>